<reference key="1">
    <citation type="journal article" date="2003" name="Nature">
        <title>The genome of a motile marine Synechococcus.</title>
        <authorList>
            <person name="Palenik B."/>
            <person name="Brahamsha B."/>
            <person name="Larimer F.W."/>
            <person name="Land M.L."/>
            <person name="Hauser L."/>
            <person name="Chain P."/>
            <person name="Lamerdin J.E."/>
            <person name="Regala W."/>
            <person name="Allen E.E."/>
            <person name="McCarren J."/>
            <person name="Paulsen I.T."/>
            <person name="Dufresne A."/>
            <person name="Partensky F."/>
            <person name="Webb E.A."/>
            <person name="Waterbury J."/>
        </authorList>
    </citation>
    <scope>NUCLEOTIDE SEQUENCE [LARGE SCALE GENOMIC DNA]</scope>
    <source>
        <strain>WH8102</strain>
    </source>
</reference>
<dbReference type="EMBL" id="BX569695">
    <property type="protein sequence ID" value="CAE08961.1"/>
    <property type="molecule type" value="Genomic_DNA"/>
</dbReference>
<dbReference type="RefSeq" id="WP_011129299.1">
    <property type="nucleotide sequence ID" value="NC_005070.1"/>
</dbReference>
<dbReference type="SMR" id="Q7U3I6"/>
<dbReference type="STRING" id="84588.SYNW2446"/>
<dbReference type="KEGG" id="syw:SYNW2446"/>
<dbReference type="eggNOG" id="COG0829">
    <property type="taxonomic scope" value="Bacteria"/>
</dbReference>
<dbReference type="HOGENOM" id="CLU_056339_4_0_3"/>
<dbReference type="Proteomes" id="UP000001422">
    <property type="component" value="Chromosome"/>
</dbReference>
<dbReference type="GO" id="GO:0005737">
    <property type="term" value="C:cytoplasm"/>
    <property type="evidence" value="ECO:0007669"/>
    <property type="project" value="UniProtKB-SubCell"/>
</dbReference>
<dbReference type="GO" id="GO:0016151">
    <property type="term" value="F:nickel cation binding"/>
    <property type="evidence" value="ECO:0007669"/>
    <property type="project" value="UniProtKB-UniRule"/>
</dbReference>
<dbReference type="HAMAP" id="MF_01384">
    <property type="entry name" value="UreD"/>
    <property type="match status" value="1"/>
</dbReference>
<dbReference type="InterPro" id="IPR002669">
    <property type="entry name" value="UreD"/>
</dbReference>
<dbReference type="PANTHER" id="PTHR33643">
    <property type="entry name" value="UREASE ACCESSORY PROTEIN D"/>
    <property type="match status" value="1"/>
</dbReference>
<dbReference type="PANTHER" id="PTHR33643:SF1">
    <property type="entry name" value="UREASE ACCESSORY PROTEIN D"/>
    <property type="match status" value="1"/>
</dbReference>
<dbReference type="Pfam" id="PF01774">
    <property type="entry name" value="UreD"/>
    <property type="match status" value="1"/>
</dbReference>
<gene>
    <name evidence="1" type="primary">ureD</name>
    <name type="ordered locus">SYNW2446</name>
</gene>
<name>URED_PARMW</name>
<feature type="chain" id="PRO_0000340529" description="Urease accessory protein UreD">
    <location>
        <begin position="1"/>
        <end position="311"/>
    </location>
</feature>
<sequence length="311" mass="34111">MQSLEPWHGRCRLQFQTNNGSTKHQGGCTAPFKLLRADVGDHGRCELPLLHTAGGLVGGDELSIELDLGPDSRSLITSVAAQKVYGSVGRSRLHPDGAWTQQSVTCRLEDTSDLEWLPQELVLYADALFQQTLTVSLPDNASFLSAEIVRLGRTAAGEQLNRGRWRSCLEIQRDGAHQPRWELVDRLELGDTSLNDPHGLGGAPVFGSLVWAAPMPLTGEQITLLLAGARHDRDGLEGTMRCSSLDQGLIARYAGHSSRDARFWFSRIWARTRALRGLSTPRIPRVWPLQEQPLTGQPFTANASPTAATTH</sequence>
<protein>
    <recommendedName>
        <fullName evidence="1">Urease accessory protein UreD</fullName>
    </recommendedName>
</protein>
<evidence type="ECO:0000255" key="1">
    <source>
        <dbReference type="HAMAP-Rule" id="MF_01384"/>
    </source>
</evidence>
<keyword id="KW-0143">Chaperone</keyword>
<keyword id="KW-0963">Cytoplasm</keyword>
<keyword id="KW-0996">Nickel insertion</keyword>
<proteinExistence type="inferred from homology"/>
<organism>
    <name type="scientific">Parasynechococcus marenigrum (strain WH8102)</name>
    <dbReference type="NCBI Taxonomy" id="84588"/>
    <lineage>
        <taxon>Bacteria</taxon>
        <taxon>Bacillati</taxon>
        <taxon>Cyanobacteriota</taxon>
        <taxon>Cyanophyceae</taxon>
        <taxon>Synechococcales</taxon>
        <taxon>Prochlorococcaceae</taxon>
        <taxon>Parasynechococcus</taxon>
        <taxon>Parasynechococcus marenigrum</taxon>
    </lineage>
</organism>
<accession>Q7U3I6</accession>
<comment type="function">
    <text evidence="1">Required for maturation of urease via the functional incorporation of the urease nickel metallocenter.</text>
</comment>
<comment type="subunit">
    <text evidence="1">UreD, UreF and UreG form a complex that acts as a GTP-hydrolysis-dependent molecular chaperone, activating the urease apoprotein by helping to assemble the nickel containing metallocenter of UreC. The UreE protein probably delivers the nickel.</text>
</comment>
<comment type="subcellular location">
    <subcellularLocation>
        <location evidence="1">Cytoplasm</location>
    </subcellularLocation>
</comment>
<comment type="similarity">
    <text evidence="1">Belongs to the UreD family.</text>
</comment>